<feature type="chain" id="PRO_0000198239" description="Calmodulin-A">
    <location>
        <begin position="1" status="less than"/>
        <end position="136" status="greater than"/>
    </location>
</feature>
<feature type="domain" description="EF-hand 1" evidence="2">
    <location>
        <begin position="1"/>
        <end position="36"/>
    </location>
</feature>
<feature type="domain" description="EF-hand 2" evidence="2">
    <location>
        <begin position="37"/>
        <end position="72"/>
    </location>
</feature>
<feature type="domain" description="EF-hand 3" evidence="2">
    <location>
        <begin position="74"/>
        <end position="109"/>
    </location>
</feature>
<feature type="domain" description="EF-hand 4" evidence="2">
    <location>
        <begin position="110"/>
        <end position="136" status="greater than"/>
    </location>
</feature>
<feature type="binding site" evidence="2">
    <location>
        <position position="14"/>
    </location>
    <ligand>
        <name>Ca(2+)</name>
        <dbReference type="ChEBI" id="CHEBI:29108"/>
        <label>1</label>
    </ligand>
</feature>
<feature type="binding site" evidence="2">
    <location>
        <position position="16"/>
    </location>
    <ligand>
        <name>Ca(2+)</name>
        <dbReference type="ChEBI" id="CHEBI:29108"/>
        <label>1</label>
    </ligand>
</feature>
<feature type="binding site" evidence="2">
    <location>
        <position position="18"/>
    </location>
    <ligand>
        <name>Ca(2+)</name>
        <dbReference type="ChEBI" id="CHEBI:29108"/>
        <label>1</label>
    </ligand>
</feature>
<feature type="binding site" evidence="2">
    <location>
        <position position="20"/>
    </location>
    <ligand>
        <name>Ca(2+)</name>
        <dbReference type="ChEBI" id="CHEBI:29108"/>
        <label>1</label>
    </ligand>
</feature>
<feature type="binding site" evidence="2">
    <location>
        <position position="25"/>
    </location>
    <ligand>
        <name>Ca(2+)</name>
        <dbReference type="ChEBI" id="CHEBI:29108"/>
        <label>1</label>
    </ligand>
</feature>
<feature type="binding site" evidence="2">
    <location>
        <position position="50"/>
    </location>
    <ligand>
        <name>Ca(2+)</name>
        <dbReference type="ChEBI" id="CHEBI:29108"/>
        <label>2</label>
    </ligand>
</feature>
<feature type="binding site" evidence="2">
    <location>
        <position position="52"/>
    </location>
    <ligand>
        <name>Ca(2+)</name>
        <dbReference type="ChEBI" id="CHEBI:29108"/>
        <label>2</label>
    </ligand>
</feature>
<feature type="binding site" evidence="2">
    <location>
        <position position="54"/>
    </location>
    <ligand>
        <name>Ca(2+)</name>
        <dbReference type="ChEBI" id="CHEBI:29108"/>
        <label>2</label>
    </ligand>
</feature>
<feature type="binding site" evidence="2">
    <location>
        <position position="56"/>
    </location>
    <ligand>
        <name>Ca(2+)</name>
        <dbReference type="ChEBI" id="CHEBI:29108"/>
        <label>2</label>
    </ligand>
</feature>
<feature type="binding site" evidence="2">
    <location>
        <position position="61"/>
    </location>
    <ligand>
        <name>Ca(2+)</name>
        <dbReference type="ChEBI" id="CHEBI:29108"/>
        <label>2</label>
    </ligand>
</feature>
<feature type="binding site" evidence="2">
    <location>
        <position position="87"/>
    </location>
    <ligand>
        <name>Ca(2+)</name>
        <dbReference type="ChEBI" id="CHEBI:29108"/>
        <label>3</label>
    </ligand>
</feature>
<feature type="binding site" evidence="2">
    <location>
        <position position="89"/>
    </location>
    <ligand>
        <name>Ca(2+)</name>
        <dbReference type="ChEBI" id="CHEBI:29108"/>
        <label>3</label>
    </ligand>
</feature>
<feature type="binding site" evidence="2">
    <location>
        <position position="91"/>
    </location>
    <ligand>
        <name>Ca(2+)</name>
        <dbReference type="ChEBI" id="CHEBI:29108"/>
        <label>3</label>
    </ligand>
</feature>
<feature type="binding site" evidence="2">
    <location>
        <position position="93"/>
    </location>
    <ligand>
        <name>Ca(2+)</name>
        <dbReference type="ChEBI" id="CHEBI:29108"/>
        <label>3</label>
    </ligand>
</feature>
<feature type="binding site" evidence="2">
    <location>
        <position position="98"/>
    </location>
    <ligand>
        <name>Ca(2+)</name>
        <dbReference type="ChEBI" id="CHEBI:29108"/>
        <label>3</label>
    </ligand>
</feature>
<feature type="binding site" evidence="2">
    <location>
        <position position="123"/>
    </location>
    <ligand>
        <name>Ca(2+)</name>
        <dbReference type="ChEBI" id="CHEBI:29108"/>
        <label>4</label>
    </ligand>
</feature>
<feature type="binding site" evidence="2">
    <location>
        <position position="125"/>
    </location>
    <ligand>
        <name>Ca(2+)</name>
        <dbReference type="ChEBI" id="CHEBI:29108"/>
        <label>4</label>
    </ligand>
</feature>
<feature type="binding site" evidence="2">
    <location>
        <position position="127"/>
    </location>
    <ligand>
        <name>Ca(2+)</name>
        <dbReference type="ChEBI" id="CHEBI:29108"/>
        <label>4</label>
    </ligand>
</feature>
<feature type="binding site" evidence="2">
    <location>
        <position position="129"/>
    </location>
    <ligand>
        <name>Ca(2+)</name>
        <dbReference type="ChEBI" id="CHEBI:29108"/>
        <label>4</label>
    </ligand>
</feature>
<feature type="binding site" evidence="2">
    <location>
        <position position="134"/>
    </location>
    <ligand>
        <name>Ca(2+)</name>
        <dbReference type="ChEBI" id="CHEBI:29108"/>
        <label>4</label>
    </ligand>
</feature>
<feature type="modified residue" description="N6,N6,N6-trimethyllysine" evidence="1">
    <location>
        <position position="109"/>
    </location>
</feature>
<feature type="non-terminal residue">
    <location>
        <position position="1"/>
    </location>
</feature>
<feature type="non-terminal residue">
    <location>
        <position position="136"/>
    </location>
</feature>
<dbReference type="EMBL" id="D10363">
    <property type="protein sequence ID" value="BAA01195.1"/>
    <property type="molecule type" value="mRNA"/>
</dbReference>
<dbReference type="PDB" id="1UP5">
    <property type="method" value="X-ray"/>
    <property type="resolution" value="1.90 A"/>
    <property type="chains" value="A/B=1-136"/>
</dbReference>
<dbReference type="PDBsum" id="1UP5"/>
<dbReference type="SMR" id="P62150"/>
<dbReference type="IntAct" id="P62150">
    <property type="interactions" value="1"/>
</dbReference>
<dbReference type="MINT" id="P62150"/>
<dbReference type="STRING" id="8090.ENSORLP00000008598"/>
<dbReference type="eggNOG" id="KOG0027">
    <property type="taxonomic scope" value="Eukaryota"/>
</dbReference>
<dbReference type="InParanoid" id="P62150"/>
<dbReference type="Proteomes" id="UP000001038">
    <property type="component" value="Unplaced"/>
</dbReference>
<dbReference type="Proteomes" id="UP000265180">
    <property type="component" value="Chromosome 9"/>
</dbReference>
<dbReference type="Proteomes" id="UP000265200">
    <property type="component" value="Chromosome 9"/>
</dbReference>
<dbReference type="GO" id="GO:0005813">
    <property type="term" value="C:centrosome"/>
    <property type="evidence" value="ECO:0000318"/>
    <property type="project" value="GO_Central"/>
</dbReference>
<dbReference type="GO" id="GO:0005737">
    <property type="term" value="C:cytoplasm"/>
    <property type="evidence" value="ECO:0000318"/>
    <property type="project" value="GO_Central"/>
</dbReference>
<dbReference type="GO" id="GO:0043209">
    <property type="term" value="C:myelin sheath"/>
    <property type="evidence" value="ECO:0000318"/>
    <property type="project" value="GO_Central"/>
</dbReference>
<dbReference type="GO" id="GO:0005509">
    <property type="term" value="F:calcium ion binding"/>
    <property type="evidence" value="ECO:0000318"/>
    <property type="project" value="GO_Central"/>
</dbReference>
<dbReference type="CDD" id="cd00051">
    <property type="entry name" value="EFh"/>
    <property type="match status" value="2"/>
</dbReference>
<dbReference type="FunFam" id="1.10.238.10:FF:000527">
    <property type="entry name" value="Calmodulin-3"/>
    <property type="match status" value="1"/>
</dbReference>
<dbReference type="Gene3D" id="1.10.238.10">
    <property type="entry name" value="EF-hand"/>
    <property type="match status" value="2"/>
</dbReference>
<dbReference type="InterPro" id="IPR050230">
    <property type="entry name" value="CALM/Myosin/TropC-like"/>
</dbReference>
<dbReference type="InterPro" id="IPR011992">
    <property type="entry name" value="EF-hand-dom_pair"/>
</dbReference>
<dbReference type="InterPro" id="IPR018247">
    <property type="entry name" value="EF_Hand_1_Ca_BS"/>
</dbReference>
<dbReference type="InterPro" id="IPR002048">
    <property type="entry name" value="EF_hand_dom"/>
</dbReference>
<dbReference type="PANTHER" id="PTHR23048:SF0">
    <property type="entry name" value="CALMODULIN LIKE 3"/>
    <property type="match status" value="1"/>
</dbReference>
<dbReference type="PANTHER" id="PTHR23048">
    <property type="entry name" value="MYOSIN LIGHT CHAIN 1, 3"/>
    <property type="match status" value="1"/>
</dbReference>
<dbReference type="Pfam" id="PF13499">
    <property type="entry name" value="EF-hand_7"/>
    <property type="match status" value="2"/>
</dbReference>
<dbReference type="SMART" id="SM00054">
    <property type="entry name" value="EFh"/>
    <property type="match status" value="4"/>
</dbReference>
<dbReference type="SUPFAM" id="SSF47473">
    <property type="entry name" value="EF-hand"/>
    <property type="match status" value="1"/>
</dbReference>
<dbReference type="PROSITE" id="PS00018">
    <property type="entry name" value="EF_HAND_1"/>
    <property type="match status" value="4"/>
</dbReference>
<dbReference type="PROSITE" id="PS50222">
    <property type="entry name" value="EF_HAND_2"/>
    <property type="match status" value="4"/>
</dbReference>
<accession>P62150</accession>
<accession>P02593</accession>
<accession>P70667</accession>
<accession>P99014</accession>
<accession>Q61379</accession>
<accession>Q61380</accession>
<organism>
    <name type="scientific">Oryzias latipes</name>
    <name type="common">Japanese rice fish</name>
    <name type="synonym">Japanese killifish</name>
    <dbReference type="NCBI Taxonomy" id="8090"/>
    <lineage>
        <taxon>Eukaryota</taxon>
        <taxon>Metazoa</taxon>
        <taxon>Chordata</taxon>
        <taxon>Craniata</taxon>
        <taxon>Vertebrata</taxon>
        <taxon>Euteleostomi</taxon>
        <taxon>Actinopterygii</taxon>
        <taxon>Neopterygii</taxon>
        <taxon>Teleostei</taxon>
        <taxon>Neoteleostei</taxon>
        <taxon>Acanthomorphata</taxon>
        <taxon>Ovalentaria</taxon>
        <taxon>Atherinomorphae</taxon>
        <taxon>Beloniformes</taxon>
        <taxon>Adrianichthyidae</taxon>
        <taxon>Oryziinae</taxon>
        <taxon>Oryzias</taxon>
    </lineage>
</organism>
<name>CALM_ORYLA</name>
<evidence type="ECO:0000250" key="1">
    <source>
        <dbReference type="UniProtKB" id="P0DP23"/>
    </source>
</evidence>
<evidence type="ECO:0000255" key="2">
    <source>
        <dbReference type="PROSITE-ProRule" id="PRU00448"/>
    </source>
</evidence>
<evidence type="ECO:0000305" key="3"/>
<gene>
    <name type="primary">calm1</name>
</gene>
<keyword id="KW-0002">3D-structure</keyword>
<keyword id="KW-0106">Calcium</keyword>
<keyword id="KW-0479">Metal-binding</keyword>
<keyword id="KW-0488">Methylation</keyword>
<keyword id="KW-1185">Reference proteome</keyword>
<keyword id="KW-0677">Repeat</keyword>
<protein>
    <recommendedName>
        <fullName>Calmodulin-A</fullName>
        <shortName>CaM A</shortName>
    </recommendedName>
</protein>
<comment type="function">
    <text evidence="1">Calmodulin acts as part of a calcium signal transduction pathway by mediating the control of a large number of enzymes, ion channels, aquaporins and other proteins through calcium-binding. Calcium-binding is required for the activation of calmodulin. Among the enzymes to be stimulated by the calmodulin-calcium complex are a number of protein kinases, such as myosin light-chain kinases and calmodulin-dependent protein kinase type II (CaMK2), and phosphatases.</text>
</comment>
<comment type="miscellaneous">
    <text>This protein has four functional calcium-binding sites.</text>
</comment>
<comment type="similarity">
    <text evidence="3">Belongs to the calmodulin family.</text>
</comment>
<reference key="1">
    <citation type="journal article" date="1992" name="Gene">
        <title>Four synonymous genes encode calmodulin in the teleost fish, medaka (Oryzias latipes): conservation of the multigene one-protein principle.</title>
        <authorList>
            <person name="Matsuo K."/>
            <person name="Sato K."/>
            <person name="Ikeshima H."/>
            <person name="Shimoda K."/>
            <person name="Takano T."/>
        </authorList>
    </citation>
    <scope>NUCLEOTIDE SEQUENCE [MRNA]</scope>
</reference>
<proteinExistence type="evidence at protein level"/>
<sequence>EQIAEFKEAFSLFDKDGDGTITTKELGTVMRSLGQNPTEAELQDMINEVDADGNGTIDFPEFLTMMARKMKDTDSEEEIREAFRVFDKDGNGYISAAELRHVMTNLGEKLTDEEVDEMIREADIDGDGQVNYEEFV</sequence>